<gene>
    <name evidence="1" type="primary">rpmF</name>
    <name type="ordered locus">Dgeo_0013</name>
</gene>
<accession>Q1J2G7</accession>
<evidence type="ECO:0000255" key="1">
    <source>
        <dbReference type="HAMAP-Rule" id="MF_00340"/>
    </source>
</evidence>
<evidence type="ECO:0000256" key="2">
    <source>
        <dbReference type="SAM" id="MobiDB-lite"/>
    </source>
</evidence>
<evidence type="ECO:0000305" key="3"/>
<protein>
    <recommendedName>
        <fullName evidence="1">Large ribosomal subunit protein bL32</fullName>
    </recommendedName>
    <alternativeName>
        <fullName evidence="3">50S ribosomal protein L32</fullName>
    </alternativeName>
</protein>
<name>RL32_DEIGD</name>
<keyword id="KW-0687">Ribonucleoprotein</keyword>
<keyword id="KW-0689">Ribosomal protein</keyword>
<proteinExistence type="inferred from homology"/>
<organism>
    <name type="scientific">Deinococcus geothermalis (strain DSM 11300 / CIP 105573 / AG-3a)</name>
    <dbReference type="NCBI Taxonomy" id="319795"/>
    <lineage>
        <taxon>Bacteria</taxon>
        <taxon>Thermotogati</taxon>
        <taxon>Deinococcota</taxon>
        <taxon>Deinococci</taxon>
        <taxon>Deinococcales</taxon>
        <taxon>Deinococcaceae</taxon>
        <taxon>Deinococcus</taxon>
    </lineage>
</organism>
<feature type="chain" id="PRO_0000296456" description="Large ribosomal subunit protein bL32">
    <location>
        <begin position="1"/>
        <end position="60"/>
    </location>
</feature>
<feature type="region of interest" description="Disordered" evidence="2">
    <location>
        <begin position="1"/>
        <end position="26"/>
    </location>
</feature>
<feature type="compositionally biased region" description="Basic residues" evidence="2">
    <location>
        <begin position="1"/>
        <end position="23"/>
    </location>
</feature>
<comment type="similarity">
    <text evidence="1">Belongs to the bacterial ribosomal protein bL32 family.</text>
</comment>
<sequence>MAKHPVPKKKTSKSKRDMRRSHHALVAPNLTECPQCHSKKLQHHICPSCGYYNGRQVLAV</sequence>
<reference key="1">
    <citation type="submission" date="2006-04" db="EMBL/GenBank/DDBJ databases">
        <title>Complete sequence of chromosome of Deinococcus geothermalis DSM 11300.</title>
        <authorList>
            <person name="Copeland A."/>
            <person name="Lucas S."/>
            <person name="Lapidus A."/>
            <person name="Barry K."/>
            <person name="Detter J.C."/>
            <person name="Glavina del Rio T."/>
            <person name="Hammon N."/>
            <person name="Israni S."/>
            <person name="Dalin E."/>
            <person name="Tice H."/>
            <person name="Pitluck S."/>
            <person name="Brettin T."/>
            <person name="Bruce D."/>
            <person name="Han C."/>
            <person name="Tapia R."/>
            <person name="Saunders E."/>
            <person name="Gilna P."/>
            <person name="Schmutz J."/>
            <person name="Larimer F."/>
            <person name="Land M."/>
            <person name="Hauser L."/>
            <person name="Kyrpides N."/>
            <person name="Kim E."/>
            <person name="Daly M.J."/>
            <person name="Fredrickson J.K."/>
            <person name="Makarova K.S."/>
            <person name="Gaidamakova E.K."/>
            <person name="Zhai M."/>
            <person name="Richardson P."/>
        </authorList>
    </citation>
    <scope>NUCLEOTIDE SEQUENCE [LARGE SCALE GENOMIC DNA]</scope>
    <source>
        <strain>DSM 11300 / CIP 105573 / AG-3a</strain>
    </source>
</reference>
<dbReference type="EMBL" id="CP000359">
    <property type="protein sequence ID" value="ABF44317.1"/>
    <property type="molecule type" value="Genomic_DNA"/>
</dbReference>
<dbReference type="RefSeq" id="WP_011529164.1">
    <property type="nucleotide sequence ID" value="NC_008025.1"/>
</dbReference>
<dbReference type="SMR" id="Q1J2G7"/>
<dbReference type="STRING" id="319795.Dgeo_0013"/>
<dbReference type="KEGG" id="dge:Dgeo_0013"/>
<dbReference type="eggNOG" id="COG0333">
    <property type="taxonomic scope" value="Bacteria"/>
</dbReference>
<dbReference type="HOGENOM" id="CLU_129084_1_3_0"/>
<dbReference type="Proteomes" id="UP000002431">
    <property type="component" value="Chromosome"/>
</dbReference>
<dbReference type="GO" id="GO:0015934">
    <property type="term" value="C:large ribosomal subunit"/>
    <property type="evidence" value="ECO:0007669"/>
    <property type="project" value="InterPro"/>
</dbReference>
<dbReference type="GO" id="GO:0003735">
    <property type="term" value="F:structural constituent of ribosome"/>
    <property type="evidence" value="ECO:0007669"/>
    <property type="project" value="InterPro"/>
</dbReference>
<dbReference type="GO" id="GO:0006412">
    <property type="term" value="P:translation"/>
    <property type="evidence" value="ECO:0007669"/>
    <property type="project" value="UniProtKB-UniRule"/>
</dbReference>
<dbReference type="Gene3D" id="1.20.5.640">
    <property type="entry name" value="Single helix bin"/>
    <property type="match status" value="1"/>
</dbReference>
<dbReference type="HAMAP" id="MF_00340">
    <property type="entry name" value="Ribosomal_bL32"/>
    <property type="match status" value="1"/>
</dbReference>
<dbReference type="InterPro" id="IPR002677">
    <property type="entry name" value="Ribosomal_bL32"/>
</dbReference>
<dbReference type="InterPro" id="IPR044957">
    <property type="entry name" value="Ribosomal_bL32_bact"/>
</dbReference>
<dbReference type="InterPro" id="IPR011332">
    <property type="entry name" value="Ribosomal_zn-bd"/>
</dbReference>
<dbReference type="NCBIfam" id="TIGR01031">
    <property type="entry name" value="rpmF_bact"/>
    <property type="match status" value="1"/>
</dbReference>
<dbReference type="PANTHER" id="PTHR35534">
    <property type="entry name" value="50S RIBOSOMAL PROTEIN L32"/>
    <property type="match status" value="1"/>
</dbReference>
<dbReference type="PANTHER" id="PTHR35534:SF1">
    <property type="entry name" value="LARGE RIBOSOMAL SUBUNIT PROTEIN BL32"/>
    <property type="match status" value="1"/>
</dbReference>
<dbReference type="Pfam" id="PF01783">
    <property type="entry name" value="Ribosomal_L32p"/>
    <property type="match status" value="1"/>
</dbReference>
<dbReference type="SUPFAM" id="SSF57829">
    <property type="entry name" value="Zn-binding ribosomal proteins"/>
    <property type="match status" value="1"/>
</dbReference>